<gene>
    <name type="ordered locus">Adeh_3962</name>
</gene>
<sequence>MPKDAPAGLAPGFLVAAPALADPNFNGSLVLMAEHHAQGALGFVVNRPGPITVADVLGGLDERLRERAEGAGRADDPVLVGGPVQPERLWILFRPGPTAPEEGAVALGSGLALGGSRELLEALVRSRDPGPYLLLLGYAGWAPLQIEHEVGEGAWVPLPLQGDLVFDVPMEKRWETAVRRLGLDPAGFLVGGGGAEA</sequence>
<accession>Q2IGM2</accession>
<organism>
    <name type="scientific">Anaeromyxobacter dehalogenans (strain 2CP-C)</name>
    <dbReference type="NCBI Taxonomy" id="290397"/>
    <lineage>
        <taxon>Bacteria</taxon>
        <taxon>Pseudomonadati</taxon>
        <taxon>Myxococcota</taxon>
        <taxon>Myxococcia</taxon>
        <taxon>Myxococcales</taxon>
        <taxon>Cystobacterineae</taxon>
        <taxon>Anaeromyxobacteraceae</taxon>
        <taxon>Anaeromyxobacter</taxon>
    </lineage>
</organism>
<comment type="similarity">
    <text evidence="1">Belongs to the UPF0301 (AlgH) family.</text>
</comment>
<dbReference type="EMBL" id="CP000251">
    <property type="protein sequence ID" value="ABC83726.1"/>
    <property type="molecule type" value="Genomic_DNA"/>
</dbReference>
<dbReference type="RefSeq" id="WP_011423008.1">
    <property type="nucleotide sequence ID" value="NC_007760.1"/>
</dbReference>
<dbReference type="SMR" id="Q2IGM2"/>
<dbReference type="STRING" id="290397.Adeh_3962"/>
<dbReference type="KEGG" id="ade:Adeh_3962"/>
<dbReference type="eggNOG" id="COG1678">
    <property type="taxonomic scope" value="Bacteria"/>
</dbReference>
<dbReference type="HOGENOM" id="CLU_057596_1_0_7"/>
<dbReference type="OrthoDB" id="9807486at2"/>
<dbReference type="Proteomes" id="UP000001935">
    <property type="component" value="Chromosome"/>
</dbReference>
<dbReference type="GO" id="GO:0005829">
    <property type="term" value="C:cytosol"/>
    <property type="evidence" value="ECO:0007669"/>
    <property type="project" value="TreeGrafter"/>
</dbReference>
<dbReference type="Gene3D" id="3.40.1740.10">
    <property type="entry name" value="VC0467-like"/>
    <property type="match status" value="1"/>
</dbReference>
<dbReference type="HAMAP" id="MF_00758">
    <property type="entry name" value="UPF0301"/>
    <property type="match status" value="1"/>
</dbReference>
<dbReference type="InterPro" id="IPR003774">
    <property type="entry name" value="AlgH-like"/>
</dbReference>
<dbReference type="PANTHER" id="PTHR30327">
    <property type="entry name" value="UNCHARACTERIZED PROTEIN YQGE"/>
    <property type="match status" value="1"/>
</dbReference>
<dbReference type="PANTHER" id="PTHR30327:SF1">
    <property type="entry name" value="UPF0301 PROTEIN YQGE"/>
    <property type="match status" value="1"/>
</dbReference>
<dbReference type="Pfam" id="PF02622">
    <property type="entry name" value="DUF179"/>
    <property type="match status" value="1"/>
</dbReference>
<dbReference type="SUPFAM" id="SSF143456">
    <property type="entry name" value="VC0467-like"/>
    <property type="match status" value="1"/>
</dbReference>
<evidence type="ECO:0000255" key="1">
    <source>
        <dbReference type="HAMAP-Rule" id="MF_00758"/>
    </source>
</evidence>
<protein>
    <recommendedName>
        <fullName evidence="1">UPF0301 protein Adeh_3962</fullName>
    </recommendedName>
</protein>
<feature type="chain" id="PRO_0000258794" description="UPF0301 protein Adeh_3962">
    <location>
        <begin position="1"/>
        <end position="197"/>
    </location>
</feature>
<keyword id="KW-1185">Reference proteome</keyword>
<reference key="1">
    <citation type="submission" date="2006-01" db="EMBL/GenBank/DDBJ databases">
        <title>Complete sequence of Anaeromyxobacter dehalogenans 2CP-C.</title>
        <authorList>
            <person name="Copeland A."/>
            <person name="Lucas S."/>
            <person name="Lapidus A."/>
            <person name="Barry K."/>
            <person name="Detter J.C."/>
            <person name="Glavina T."/>
            <person name="Hammon N."/>
            <person name="Israni S."/>
            <person name="Pitluck S."/>
            <person name="Brettin T."/>
            <person name="Bruce D."/>
            <person name="Han C."/>
            <person name="Tapia R."/>
            <person name="Gilna P."/>
            <person name="Kiss H."/>
            <person name="Schmutz J."/>
            <person name="Larimer F."/>
            <person name="Land M."/>
            <person name="Kyrpides N."/>
            <person name="Anderson I."/>
            <person name="Sanford R.A."/>
            <person name="Ritalahti K.M."/>
            <person name="Thomas H.S."/>
            <person name="Kirby J.R."/>
            <person name="Zhulin I.B."/>
            <person name="Loeffler F.E."/>
            <person name="Richardson P."/>
        </authorList>
    </citation>
    <scope>NUCLEOTIDE SEQUENCE [LARGE SCALE GENOMIC DNA]</scope>
    <source>
        <strain>2CP-C</strain>
    </source>
</reference>
<proteinExistence type="inferred from homology"/>
<name>Y3962_ANADE</name>